<organism>
    <name type="scientific">Streptomyces coelicolor (strain ATCC BAA-471 / A3(2) / M145)</name>
    <dbReference type="NCBI Taxonomy" id="100226"/>
    <lineage>
        <taxon>Bacteria</taxon>
        <taxon>Bacillati</taxon>
        <taxon>Actinomycetota</taxon>
        <taxon>Actinomycetes</taxon>
        <taxon>Kitasatosporales</taxon>
        <taxon>Streptomycetaceae</taxon>
        <taxon>Streptomyces</taxon>
        <taxon>Streptomyces albidoflavus group</taxon>
    </lineage>
</organism>
<protein>
    <recommendedName>
        <fullName evidence="1">Threonine--tRNA ligase</fullName>
        <ecNumber evidence="1">6.1.1.3</ecNumber>
    </recommendedName>
    <alternativeName>
        <fullName evidence="1">Threonyl-tRNA synthetase</fullName>
        <shortName evidence="1">ThrRS</shortName>
    </alternativeName>
</protein>
<feature type="chain" id="PRO_0000101058" description="Threonine--tRNA ligase">
    <location>
        <begin position="1"/>
        <end position="658"/>
    </location>
</feature>
<feature type="domain" description="TGS" evidence="2">
    <location>
        <begin position="1"/>
        <end position="61"/>
    </location>
</feature>
<feature type="region of interest" description="Catalytic" evidence="1">
    <location>
        <begin position="259"/>
        <end position="554"/>
    </location>
</feature>
<feature type="binding site" evidence="1">
    <location>
        <position position="353"/>
    </location>
    <ligand>
        <name>Zn(2+)</name>
        <dbReference type="ChEBI" id="CHEBI:29105"/>
    </ligand>
</feature>
<feature type="binding site" evidence="1">
    <location>
        <position position="404"/>
    </location>
    <ligand>
        <name>Zn(2+)</name>
        <dbReference type="ChEBI" id="CHEBI:29105"/>
    </ligand>
</feature>
<feature type="binding site" evidence="1">
    <location>
        <position position="531"/>
    </location>
    <ligand>
        <name>Zn(2+)</name>
        <dbReference type="ChEBI" id="CHEBI:29105"/>
    </ligand>
</feature>
<name>SYT_STRCO</name>
<proteinExistence type="inferred from homology"/>
<accession>Q9L278</accession>
<keyword id="KW-0030">Aminoacyl-tRNA synthetase</keyword>
<keyword id="KW-0067">ATP-binding</keyword>
<keyword id="KW-0963">Cytoplasm</keyword>
<keyword id="KW-0436">Ligase</keyword>
<keyword id="KW-0479">Metal-binding</keyword>
<keyword id="KW-0547">Nucleotide-binding</keyword>
<keyword id="KW-0648">Protein biosynthesis</keyword>
<keyword id="KW-1185">Reference proteome</keyword>
<keyword id="KW-0694">RNA-binding</keyword>
<keyword id="KW-0820">tRNA-binding</keyword>
<keyword id="KW-0862">Zinc</keyword>
<reference key="1">
    <citation type="journal article" date="2002" name="Nature">
        <title>Complete genome sequence of the model actinomycete Streptomyces coelicolor A3(2).</title>
        <authorList>
            <person name="Bentley S.D."/>
            <person name="Chater K.F."/>
            <person name="Cerdeno-Tarraga A.-M."/>
            <person name="Challis G.L."/>
            <person name="Thomson N.R."/>
            <person name="James K.D."/>
            <person name="Harris D.E."/>
            <person name="Quail M.A."/>
            <person name="Kieser H."/>
            <person name="Harper D."/>
            <person name="Bateman A."/>
            <person name="Brown S."/>
            <person name="Chandra G."/>
            <person name="Chen C.W."/>
            <person name="Collins M."/>
            <person name="Cronin A."/>
            <person name="Fraser A."/>
            <person name="Goble A."/>
            <person name="Hidalgo J."/>
            <person name="Hornsby T."/>
            <person name="Howarth S."/>
            <person name="Huang C.-H."/>
            <person name="Kieser T."/>
            <person name="Larke L."/>
            <person name="Murphy L.D."/>
            <person name="Oliver K."/>
            <person name="O'Neil S."/>
            <person name="Rabbinowitsch E."/>
            <person name="Rajandream M.A."/>
            <person name="Rutherford K.M."/>
            <person name="Rutter S."/>
            <person name="Seeger K."/>
            <person name="Saunders D."/>
            <person name="Sharp S."/>
            <person name="Squares R."/>
            <person name="Squares S."/>
            <person name="Taylor K."/>
            <person name="Warren T."/>
            <person name="Wietzorrek A."/>
            <person name="Woodward J.R."/>
            <person name="Barrell B.G."/>
            <person name="Parkhill J."/>
            <person name="Hopwood D.A."/>
        </authorList>
    </citation>
    <scope>NUCLEOTIDE SEQUENCE [LARGE SCALE GENOMIC DNA]</scope>
    <source>
        <strain>ATCC BAA-471 / A3(2) / M145</strain>
    </source>
</reference>
<evidence type="ECO:0000255" key="1">
    <source>
        <dbReference type="HAMAP-Rule" id="MF_00184"/>
    </source>
</evidence>
<evidence type="ECO:0000255" key="2">
    <source>
        <dbReference type="PROSITE-ProRule" id="PRU01228"/>
    </source>
</evidence>
<dbReference type="EC" id="6.1.1.3" evidence="1"/>
<dbReference type="EMBL" id="AL939109">
    <property type="protein sequence ID" value="CAB70933.1"/>
    <property type="molecule type" value="Genomic_DNA"/>
</dbReference>
<dbReference type="RefSeq" id="NP_625810.1">
    <property type="nucleotide sequence ID" value="NC_003888.3"/>
</dbReference>
<dbReference type="RefSeq" id="WP_003977296.1">
    <property type="nucleotide sequence ID" value="NZ_VNID01000021.1"/>
</dbReference>
<dbReference type="SMR" id="Q9L278"/>
<dbReference type="FunCoup" id="Q9L278">
    <property type="interactions" value="461"/>
</dbReference>
<dbReference type="STRING" id="100226.gene:17759117"/>
<dbReference type="PaxDb" id="100226-SCO1531"/>
<dbReference type="GeneID" id="91387502"/>
<dbReference type="KEGG" id="sco:SCO1531"/>
<dbReference type="PATRIC" id="fig|100226.15.peg.1540"/>
<dbReference type="eggNOG" id="COG0441">
    <property type="taxonomic scope" value="Bacteria"/>
</dbReference>
<dbReference type="HOGENOM" id="CLU_008554_0_1_11"/>
<dbReference type="InParanoid" id="Q9L278"/>
<dbReference type="OrthoDB" id="9802304at2"/>
<dbReference type="PhylomeDB" id="Q9L278"/>
<dbReference type="Proteomes" id="UP000001973">
    <property type="component" value="Chromosome"/>
</dbReference>
<dbReference type="GO" id="GO:0005737">
    <property type="term" value="C:cytoplasm"/>
    <property type="evidence" value="ECO:0007669"/>
    <property type="project" value="UniProtKB-SubCell"/>
</dbReference>
<dbReference type="GO" id="GO:0005524">
    <property type="term" value="F:ATP binding"/>
    <property type="evidence" value="ECO:0007669"/>
    <property type="project" value="UniProtKB-UniRule"/>
</dbReference>
<dbReference type="GO" id="GO:0046872">
    <property type="term" value="F:metal ion binding"/>
    <property type="evidence" value="ECO:0007669"/>
    <property type="project" value="UniProtKB-KW"/>
</dbReference>
<dbReference type="GO" id="GO:0004829">
    <property type="term" value="F:threonine-tRNA ligase activity"/>
    <property type="evidence" value="ECO:0000318"/>
    <property type="project" value="GO_Central"/>
</dbReference>
<dbReference type="GO" id="GO:0000049">
    <property type="term" value="F:tRNA binding"/>
    <property type="evidence" value="ECO:0007669"/>
    <property type="project" value="UniProtKB-KW"/>
</dbReference>
<dbReference type="GO" id="GO:0006435">
    <property type="term" value="P:threonyl-tRNA aminoacylation"/>
    <property type="evidence" value="ECO:0000318"/>
    <property type="project" value="GO_Central"/>
</dbReference>
<dbReference type="CDD" id="cd00860">
    <property type="entry name" value="ThrRS_anticodon"/>
    <property type="match status" value="1"/>
</dbReference>
<dbReference type="CDD" id="cd00771">
    <property type="entry name" value="ThrRS_core"/>
    <property type="match status" value="1"/>
</dbReference>
<dbReference type="FunFam" id="3.30.54.20:FF:000003">
    <property type="entry name" value="Threonine--tRNA ligase"/>
    <property type="match status" value="1"/>
</dbReference>
<dbReference type="FunFam" id="3.30.930.10:FF:000019">
    <property type="entry name" value="Threonine--tRNA ligase"/>
    <property type="match status" value="1"/>
</dbReference>
<dbReference type="FunFam" id="3.40.50.800:FF:000001">
    <property type="entry name" value="Threonine--tRNA ligase"/>
    <property type="match status" value="1"/>
</dbReference>
<dbReference type="FunFam" id="3.30.980.10:FF:000005">
    <property type="entry name" value="Threonyl-tRNA synthetase, mitochondrial"/>
    <property type="match status" value="1"/>
</dbReference>
<dbReference type="Gene3D" id="3.30.54.20">
    <property type="match status" value="1"/>
</dbReference>
<dbReference type="Gene3D" id="3.40.50.800">
    <property type="entry name" value="Anticodon-binding domain"/>
    <property type="match status" value="1"/>
</dbReference>
<dbReference type="Gene3D" id="3.30.930.10">
    <property type="entry name" value="Bira Bifunctional Protein, Domain 2"/>
    <property type="match status" value="1"/>
</dbReference>
<dbReference type="Gene3D" id="3.30.980.10">
    <property type="entry name" value="Threonyl-trna Synthetase, Chain A, domain 2"/>
    <property type="match status" value="1"/>
</dbReference>
<dbReference type="HAMAP" id="MF_00184">
    <property type="entry name" value="Thr_tRNA_synth"/>
    <property type="match status" value="1"/>
</dbReference>
<dbReference type="InterPro" id="IPR002314">
    <property type="entry name" value="aa-tRNA-synt_IIb"/>
</dbReference>
<dbReference type="InterPro" id="IPR006195">
    <property type="entry name" value="aa-tRNA-synth_II"/>
</dbReference>
<dbReference type="InterPro" id="IPR045864">
    <property type="entry name" value="aa-tRNA-synth_II/BPL/LPL"/>
</dbReference>
<dbReference type="InterPro" id="IPR004154">
    <property type="entry name" value="Anticodon-bd"/>
</dbReference>
<dbReference type="InterPro" id="IPR036621">
    <property type="entry name" value="Anticodon-bd_dom_sf"/>
</dbReference>
<dbReference type="InterPro" id="IPR004095">
    <property type="entry name" value="TGS"/>
</dbReference>
<dbReference type="InterPro" id="IPR002320">
    <property type="entry name" value="Thr-tRNA-ligase_IIa"/>
</dbReference>
<dbReference type="InterPro" id="IPR018163">
    <property type="entry name" value="Thr/Ala-tRNA-synth_IIc_edit"/>
</dbReference>
<dbReference type="InterPro" id="IPR047246">
    <property type="entry name" value="ThrRS_anticodon"/>
</dbReference>
<dbReference type="InterPro" id="IPR033728">
    <property type="entry name" value="ThrRS_core"/>
</dbReference>
<dbReference type="InterPro" id="IPR012947">
    <property type="entry name" value="tRNA_SAD"/>
</dbReference>
<dbReference type="NCBIfam" id="TIGR00418">
    <property type="entry name" value="thrS"/>
    <property type="match status" value="1"/>
</dbReference>
<dbReference type="PANTHER" id="PTHR11451:SF44">
    <property type="entry name" value="THREONINE--TRNA LIGASE, CHLOROPLASTIC_MITOCHONDRIAL 2"/>
    <property type="match status" value="1"/>
</dbReference>
<dbReference type="PANTHER" id="PTHR11451">
    <property type="entry name" value="THREONINE-TRNA LIGASE"/>
    <property type="match status" value="1"/>
</dbReference>
<dbReference type="Pfam" id="PF03129">
    <property type="entry name" value="HGTP_anticodon"/>
    <property type="match status" value="1"/>
</dbReference>
<dbReference type="Pfam" id="PF00587">
    <property type="entry name" value="tRNA-synt_2b"/>
    <property type="match status" value="1"/>
</dbReference>
<dbReference type="Pfam" id="PF07973">
    <property type="entry name" value="tRNA_SAD"/>
    <property type="match status" value="1"/>
</dbReference>
<dbReference type="PRINTS" id="PR01047">
    <property type="entry name" value="TRNASYNTHTHR"/>
</dbReference>
<dbReference type="SMART" id="SM00863">
    <property type="entry name" value="tRNA_SAD"/>
    <property type="match status" value="1"/>
</dbReference>
<dbReference type="SUPFAM" id="SSF52954">
    <property type="entry name" value="Class II aaRS ABD-related"/>
    <property type="match status" value="1"/>
</dbReference>
<dbReference type="SUPFAM" id="SSF55681">
    <property type="entry name" value="Class II aaRS and biotin synthetases"/>
    <property type="match status" value="1"/>
</dbReference>
<dbReference type="SUPFAM" id="SSF55186">
    <property type="entry name" value="ThrRS/AlaRS common domain"/>
    <property type="match status" value="1"/>
</dbReference>
<dbReference type="PROSITE" id="PS50862">
    <property type="entry name" value="AA_TRNA_LIGASE_II"/>
    <property type="match status" value="1"/>
</dbReference>
<dbReference type="PROSITE" id="PS51880">
    <property type="entry name" value="TGS"/>
    <property type="match status" value="1"/>
</dbReference>
<sequence length="658" mass="74565">MSDVRVIIQRDSEREERVVTTGTTAAELFAGERSIIAARVSGDLKDLAYEVKDGETVEAVEISSEDGLDILRHSTAHVMAQAVQELFPEAKLGIGPPVKDGFYYDFDVEKPFHPDDLKAIEKKMQEIQKRGQRFSRRVVTDEAAREELADEPYKLELIGLKGSASSDDGADVEVGAGELTIYDNLDAKTGELCWKDLCRGPHLPTTRNIPAFKLMRNAAAYWRGSEKNPMLQRIYGTAWPTKDELKAHLEFLAEAEKRDHRKLGSELDLFSIPEQIGSGLAVFHPKGGIIRRVMEDYSRRRHEEEGYEFVYTPHATKGKLFETSGHLDWYADGMYPPMQLDEGVDYYLKPMNCPMHNLIFDARGRSYRELPLRLFEFGTVYRYEKSGVVHGLTRARGFTQDDAHIYCTREQMSEELDKTLTFVLNLLRDYGLNDFYLELSTKDPEKFVGSDEAWEEATETLRQVAEKQNLELVADPGGAAFYGPKISVQARDAIGRTWQMSTIQLDFNLPERFSLEYTAADGAKTRPVMIHRALFGSIERFFAVLLEHYAGAMPPWLAPVQAVGIPVGDAHVQYLEEFAAEARRKGLRVDVDASSDRMQKKIRTQQKQKVPFMIIVGDEDMHGGTVSFRYRDGSQENGIPRDQALAKLVDVVERRIQV</sequence>
<gene>
    <name evidence="1" type="primary">thrS</name>
    <name type="ordered locus">SCO1531</name>
    <name type="ORF">SCL2.21c</name>
</gene>
<comment type="function">
    <text evidence="1">Catalyzes the attachment of threonine to tRNA(Thr) in a two-step reaction: L-threonine is first activated by ATP to form Thr-AMP and then transferred to the acceptor end of tRNA(Thr). Also edits incorrectly charged L-seryl-tRNA(Thr).</text>
</comment>
<comment type="catalytic activity">
    <reaction evidence="1">
        <text>tRNA(Thr) + L-threonine + ATP = L-threonyl-tRNA(Thr) + AMP + diphosphate + H(+)</text>
        <dbReference type="Rhea" id="RHEA:24624"/>
        <dbReference type="Rhea" id="RHEA-COMP:9670"/>
        <dbReference type="Rhea" id="RHEA-COMP:9704"/>
        <dbReference type="ChEBI" id="CHEBI:15378"/>
        <dbReference type="ChEBI" id="CHEBI:30616"/>
        <dbReference type="ChEBI" id="CHEBI:33019"/>
        <dbReference type="ChEBI" id="CHEBI:57926"/>
        <dbReference type="ChEBI" id="CHEBI:78442"/>
        <dbReference type="ChEBI" id="CHEBI:78534"/>
        <dbReference type="ChEBI" id="CHEBI:456215"/>
        <dbReference type="EC" id="6.1.1.3"/>
    </reaction>
</comment>
<comment type="cofactor">
    <cofactor evidence="1">
        <name>Zn(2+)</name>
        <dbReference type="ChEBI" id="CHEBI:29105"/>
    </cofactor>
    <text evidence="1">Binds 1 zinc ion per subunit.</text>
</comment>
<comment type="subunit">
    <text evidence="1">Homodimer.</text>
</comment>
<comment type="subcellular location">
    <subcellularLocation>
        <location evidence="1">Cytoplasm</location>
    </subcellularLocation>
</comment>
<comment type="similarity">
    <text evidence="1">Belongs to the class-II aminoacyl-tRNA synthetase family.</text>
</comment>